<feature type="chain" id="PRO_1000009779" description="dCTP deaminase">
    <location>
        <begin position="1"/>
        <end position="185"/>
    </location>
</feature>
<feature type="active site" description="Proton donor/acceptor" evidence="1">
    <location>
        <position position="134"/>
    </location>
</feature>
<feature type="binding site" evidence="1">
    <location>
        <begin position="108"/>
        <end position="113"/>
    </location>
    <ligand>
        <name>dCTP</name>
        <dbReference type="ChEBI" id="CHEBI:61481"/>
    </ligand>
</feature>
<feature type="binding site" evidence="1">
    <location>
        <begin position="132"/>
        <end position="134"/>
    </location>
    <ligand>
        <name>dCTP</name>
        <dbReference type="ChEBI" id="CHEBI:61481"/>
    </ligand>
</feature>
<feature type="binding site" evidence="1">
    <location>
        <position position="153"/>
    </location>
    <ligand>
        <name>dCTP</name>
        <dbReference type="ChEBI" id="CHEBI:61481"/>
    </ligand>
</feature>
<feature type="binding site" evidence="1">
    <location>
        <position position="167"/>
    </location>
    <ligand>
        <name>dCTP</name>
        <dbReference type="ChEBI" id="CHEBI:61481"/>
    </ligand>
</feature>
<feature type="binding site" evidence="1">
    <location>
        <position position="177"/>
    </location>
    <ligand>
        <name>dCTP</name>
        <dbReference type="ChEBI" id="CHEBI:61481"/>
    </ligand>
</feature>
<protein>
    <recommendedName>
        <fullName evidence="1">dCTP deaminase</fullName>
        <ecNumber evidence="1">3.5.4.13</ecNumber>
    </recommendedName>
    <alternativeName>
        <fullName evidence="1">Deoxycytidine triphosphate deaminase</fullName>
    </alternativeName>
</protein>
<keyword id="KW-0378">Hydrolase</keyword>
<keyword id="KW-0546">Nucleotide metabolism</keyword>
<keyword id="KW-0547">Nucleotide-binding</keyword>
<keyword id="KW-1185">Reference proteome</keyword>
<gene>
    <name evidence="1" type="primary">dcd</name>
    <name type="ordered locus">SAR11_0472</name>
</gene>
<proteinExistence type="inferred from homology"/>
<name>DCD_PELUB</name>
<dbReference type="EC" id="3.5.4.13" evidence="1"/>
<dbReference type="EMBL" id="CP000084">
    <property type="protein sequence ID" value="AAZ21294.1"/>
    <property type="molecule type" value="Genomic_DNA"/>
</dbReference>
<dbReference type="RefSeq" id="WP_006997431.1">
    <property type="nucleotide sequence ID" value="NC_007205.1"/>
</dbReference>
<dbReference type="SMR" id="Q4FNE5"/>
<dbReference type="STRING" id="335992.SAR11_0472"/>
<dbReference type="GeneID" id="66294972"/>
<dbReference type="KEGG" id="pub:SAR11_0472"/>
<dbReference type="eggNOG" id="COG0717">
    <property type="taxonomic scope" value="Bacteria"/>
</dbReference>
<dbReference type="HOGENOM" id="CLU_087476_4_0_5"/>
<dbReference type="OrthoDB" id="9780956at2"/>
<dbReference type="UniPathway" id="UPA00610">
    <property type="reaction ID" value="UER00665"/>
</dbReference>
<dbReference type="Proteomes" id="UP000002528">
    <property type="component" value="Chromosome"/>
</dbReference>
<dbReference type="GO" id="GO:0008829">
    <property type="term" value="F:dCTP deaminase activity"/>
    <property type="evidence" value="ECO:0007669"/>
    <property type="project" value="UniProtKB-UniRule"/>
</dbReference>
<dbReference type="GO" id="GO:0000166">
    <property type="term" value="F:nucleotide binding"/>
    <property type="evidence" value="ECO:0007669"/>
    <property type="project" value="UniProtKB-KW"/>
</dbReference>
<dbReference type="GO" id="GO:0006226">
    <property type="term" value="P:dUMP biosynthetic process"/>
    <property type="evidence" value="ECO:0007669"/>
    <property type="project" value="UniProtKB-UniPathway"/>
</dbReference>
<dbReference type="GO" id="GO:0006229">
    <property type="term" value="P:dUTP biosynthetic process"/>
    <property type="evidence" value="ECO:0007669"/>
    <property type="project" value="UniProtKB-UniRule"/>
</dbReference>
<dbReference type="CDD" id="cd07557">
    <property type="entry name" value="trimeric_dUTPase"/>
    <property type="match status" value="1"/>
</dbReference>
<dbReference type="Gene3D" id="2.70.40.10">
    <property type="match status" value="1"/>
</dbReference>
<dbReference type="HAMAP" id="MF_00146">
    <property type="entry name" value="dCTP_deaminase"/>
    <property type="match status" value="1"/>
</dbReference>
<dbReference type="InterPro" id="IPR011962">
    <property type="entry name" value="dCTP_deaminase"/>
</dbReference>
<dbReference type="InterPro" id="IPR036157">
    <property type="entry name" value="dUTPase-like_sf"/>
</dbReference>
<dbReference type="InterPro" id="IPR033704">
    <property type="entry name" value="dUTPase_trimeric"/>
</dbReference>
<dbReference type="NCBIfam" id="TIGR02274">
    <property type="entry name" value="dCTP_deam"/>
    <property type="match status" value="1"/>
</dbReference>
<dbReference type="PANTHER" id="PTHR42680">
    <property type="entry name" value="DCTP DEAMINASE"/>
    <property type="match status" value="1"/>
</dbReference>
<dbReference type="PANTHER" id="PTHR42680:SF3">
    <property type="entry name" value="DCTP DEAMINASE"/>
    <property type="match status" value="1"/>
</dbReference>
<dbReference type="Pfam" id="PF22769">
    <property type="entry name" value="DCD"/>
    <property type="match status" value="1"/>
</dbReference>
<dbReference type="SUPFAM" id="SSF51283">
    <property type="entry name" value="dUTPase-like"/>
    <property type="match status" value="1"/>
</dbReference>
<comment type="function">
    <text evidence="1">Catalyzes the deamination of dCTP to dUTP.</text>
</comment>
<comment type="catalytic activity">
    <reaction evidence="1">
        <text>dCTP + H2O + H(+) = dUTP + NH4(+)</text>
        <dbReference type="Rhea" id="RHEA:22680"/>
        <dbReference type="ChEBI" id="CHEBI:15377"/>
        <dbReference type="ChEBI" id="CHEBI:15378"/>
        <dbReference type="ChEBI" id="CHEBI:28938"/>
        <dbReference type="ChEBI" id="CHEBI:61481"/>
        <dbReference type="ChEBI" id="CHEBI:61555"/>
        <dbReference type="EC" id="3.5.4.13"/>
    </reaction>
</comment>
<comment type="pathway">
    <text evidence="1">Pyrimidine metabolism; dUMP biosynthesis; dUMP from dCTP (dUTP route): step 1/2.</text>
</comment>
<comment type="subunit">
    <text evidence="1">Homotrimer.</text>
</comment>
<comment type="similarity">
    <text evidence="1">Belongs to the dCTP deaminase family.</text>
</comment>
<evidence type="ECO:0000255" key="1">
    <source>
        <dbReference type="HAMAP-Rule" id="MF_00146"/>
    </source>
</evidence>
<organism>
    <name type="scientific">Pelagibacter ubique (strain HTCC1062)</name>
    <dbReference type="NCBI Taxonomy" id="335992"/>
    <lineage>
        <taxon>Bacteria</taxon>
        <taxon>Pseudomonadati</taxon>
        <taxon>Pseudomonadota</taxon>
        <taxon>Alphaproteobacteria</taxon>
        <taxon>Candidatus Pelagibacterales</taxon>
        <taxon>Candidatus Pelagibacteraceae</taxon>
        <taxon>Candidatus Pelagibacter</taxon>
    </lineage>
</organism>
<accession>Q4FNE5</accession>
<reference key="1">
    <citation type="journal article" date="2005" name="Science">
        <title>Genome streamlining in a cosmopolitan oceanic bacterium.</title>
        <authorList>
            <person name="Giovannoni S.J."/>
            <person name="Tripp H.J."/>
            <person name="Givan S."/>
            <person name="Podar M."/>
            <person name="Vergin K.L."/>
            <person name="Baptista D."/>
            <person name="Bibbs L."/>
            <person name="Eads J."/>
            <person name="Richardson T.H."/>
            <person name="Noordewier M."/>
            <person name="Rappe M.S."/>
            <person name="Short J.M."/>
            <person name="Carrington J.C."/>
            <person name="Mathur E.J."/>
        </authorList>
    </citation>
    <scope>NUCLEOTIDE SEQUENCE [LARGE SCALE GENOMIC DNA]</scope>
    <source>
        <strain>HTCC1062</strain>
    </source>
</reference>
<sequence>MSVLSDKSIRKLAVEQSMISPFIDKQVRDGKISYGLSSFGYDARVGDEFKIFHNVNSSIVDPKEFSSDNFVTKKSSDYIIIPPNSFALGTTIEVFKIPRDIMCIVVGKSTYARTGIIVNVTPIESEFFGTVTLEFSNTTPLPAKIYANEGVAQFLFLKGDQSPETSYADRKGKYMGQTGVTLPKV</sequence>